<gene>
    <name evidence="1" type="primary">atpH</name>
    <name type="ordered locus">RPR_04935</name>
</gene>
<reference key="1">
    <citation type="journal article" date="2009" name="PLoS ONE">
        <title>Genome sequence of the endosymbiont Rickettsia peacockii and comparison with virulent Rickettsia rickettsii: identification of virulence factors.</title>
        <authorList>
            <person name="Felsheim R.F."/>
            <person name="Kurtti T.J."/>
            <person name="Munderloh U.G."/>
        </authorList>
    </citation>
    <scope>NUCLEOTIDE SEQUENCE [LARGE SCALE GENOMIC DNA]</scope>
    <source>
        <strain>Rustic</strain>
    </source>
</reference>
<sequence>MNKGNLIENYAVALFNNAMVDNIQDKIFEEITSINRIITDNFDIREFLFSPIVNKNDKINAVNSLAKNIKISTIVQNFLLLLVKNSRIAILSNIVDAYNTLLYESKNIKIVQVISANKLQPKEQEWIKSRIEKELNQKTEILFDIDNTIIGGIVIKYDSMLQDYSIKGSLEKITKALKTVNIAV</sequence>
<dbReference type="EMBL" id="CP001227">
    <property type="protein sequence ID" value="ACR47628.1"/>
    <property type="molecule type" value="Genomic_DNA"/>
</dbReference>
<dbReference type="RefSeq" id="WP_012736840.1">
    <property type="nucleotide sequence ID" value="NC_012730.1"/>
</dbReference>
<dbReference type="SMR" id="C4K230"/>
<dbReference type="KEGG" id="rpk:RPR_04935"/>
<dbReference type="HOGENOM" id="CLU_085114_1_1_5"/>
<dbReference type="Proteomes" id="UP000005015">
    <property type="component" value="Chromosome"/>
</dbReference>
<dbReference type="GO" id="GO:0005886">
    <property type="term" value="C:plasma membrane"/>
    <property type="evidence" value="ECO:0007669"/>
    <property type="project" value="UniProtKB-SubCell"/>
</dbReference>
<dbReference type="GO" id="GO:0045259">
    <property type="term" value="C:proton-transporting ATP synthase complex"/>
    <property type="evidence" value="ECO:0007669"/>
    <property type="project" value="UniProtKB-KW"/>
</dbReference>
<dbReference type="GO" id="GO:0046933">
    <property type="term" value="F:proton-transporting ATP synthase activity, rotational mechanism"/>
    <property type="evidence" value="ECO:0007669"/>
    <property type="project" value="UniProtKB-UniRule"/>
</dbReference>
<dbReference type="Gene3D" id="1.10.520.20">
    <property type="entry name" value="N-terminal domain of the delta subunit of the F1F0-ATP synthase"/>
    <property type="match status" value="1"/>
</dbReference>
<dbReference type="HAMAP" id="MF_01416">
    <property type="entry name" value="ATP_synth_delta_bact"/>
    <property type="match status" value="1"/>
</dbReference>
<dbReference type="InterPro" id="IPR026015">
    <property type="entry name" value="ATP_synth_OSCP/delta_N_sf"/>
</dbReference>
<dbReference type="InterPro" id="IPR000711">
    <property type="entry name" value="ATPase_OSCP/dsu"/>
</dbReference>
<dbReference type="NCBIfam" id="TIGR01145">
    <property type="entry name" value="ATP_synt_delta"/>
    <property type="match status" value="1"/>
</dbReference>
<dbReference type="PANTHER" id="PTHR11910">
    <property type="entry name" value="ATP SYNTHASE DELTA CHAIN"/>
    <property type="match status" value="1"/>
</dbReference>
<dbReference type="Pfam" id="PF00213">
    <property type="entry name" value="OSCP"/>
    <property type="match status" value="1"/>
</dbReference>
<dbReference type="PRINTS" id="PR00125">
    <property type="entry name" value="ATPASEDELTA"/>
</dbReference>
<dbReference type="SUPFAM" id="SSF47928">
    <property type="entry name" value="N-terminal domain of the delta subunit of the F1F0-ATP synthase"/>
    <property type="match status" value="1"/>
</dbReference>
<name>ATPD_RICPU</name>
<evidence type="ECO:0000255" key="1">
    <source>
        <dbReference type="HAMAP-Rule" id="MF_01416"/>
    </source>
</evidence>
<accession>C4K230</accession>
<keyword id="KW-0066">ATP synthesis</keyword>
<keyword id="KW-0997">Cell inner membrane</keyword>
<keyword id="KW-1003">Cell membrane</keyword>
<keyword id="KW-0139">CF(1)</keyword>
<keyword id="KW-0375">Hydrogen ion transport</keyword>
<keyword id="KW-0406">Ion transport</keyword>
<keyword id="KW-0472">Membrane</keyword>
<keyword id="KW-0813">Transport</keyword>
<protein>
    <recommendedName>
        <fullName evidence="1">ATP synthase subunit delta</fullName>
    </recommendedName>
    <alternativeName>
        <fullName evidence="1">ATP synthase F(1) sector subunit delta</fullName>
    </alternativeName>
    <alternativeName>
        <fullName evidence="1">F-type ATPase subunit delta</fullName>
        <shortName evidence="1">F-ATPase subunit delta</shortName>
    </alternativeName>
</protein>
<organism>
    <name type="scientific">Rickettsia peacockii (strain Rustic)</name>
    <dbReference type="NCBI Taxonomy" id="562019"/>
    <lineage>
        <taxon>Bacteria</taxon>
        <taxon>Pseudomonadati</taxon>
        <taxon>Pseudomonadota</taxon>
        <taxon>Alphaproteobacteria</taxon>
        <taxon>Rickettsiales</taxon>
        <taxon>Rickettsiaceae</taxon>
        <taxon>Rickettsieae</taxon>
        <taxon>Rickettsia</taxon>
        <taxon>spotted fever group</taxon>
    </lineage>
</organism>
<feature type="chain" id="PRO_1000215242" description="ATP synthase subunit delta">
    <location>
        <begin position="1"/>
        <end position="184"/>
    </location>
</feature>
<proteinExistence type="inferred from homology"/>
<comment type="function">
    <text evidence="1">F(1)F(0) ATP synthase produces ATP from ADP in the presence of a proton or sodium gradient. F-type ATPases consist of two structural domains, F(1) containing the extramembraneous catalytic core and F(0) containing the membrane proton channel, linked together by a central stalk and a peripheral stalk. During catalysis, ATP synthesis in the catalytic domain of F(1) is coupled via a rotary mechanism of the central stalk subunits to proton translocation.</text>
</comment>
<comment type="function">
    <text evidence="1">This protein is part of the stalk that links CF(0) to CF(1). It either transmits conformational changes from CF(0) to CF(1) or is implicated in proton conduction.</text>
</comment>
<comment type="subunit">
    <text evidence="1">F-type ATPases have 2 components, F(1) - the catalytic core - and F(0) - the membrane proton channel. F(1) has five subunits: alpha(3), beta(3), gamma(1), delta(1), epsilon(1). F(0) has three main subunits: a(1), b(2) and c(10-14). The alpha and beta chains form an alternating ring which encloses part of the gamma chain. F(1) is attached to F(0) by a central stalk formed by the gamma and epsilon chains, while a peripheral stalk is formed by the delta and b chains.</text>
</comment>
<comment type="subcellular location">
    <subcellularLocation>
        <location evidence="1">Cell inner membrane</location>
        <topology evidence="1">Peripheral membrane protein</topology>
    </subcellularLocation>
</comment>
<comment type="similarity">
    <text evidence="1">Belongs to the ATPase delta chain family.</text>
</comment>